<accession>Q5F629</accession>
<protein>
    <recommendedName>
        <fullName evidence="1">NADH-quinone oxidoreductase subunit N</fullName>
        <ecNumber evidence="1">7.1.1.-</ecNumber>
    </recommendedName>
    <alternativeName>
        <fullName evidence="1">NADH dehydrogenase I subunit N</fullName>
    </alternativeName>
    <alternativeName>
        <fullName evidence="1">NDH-1 subunit N</fullName>
    </alternativeName>
</protein>
<gene>
    <name evidence="1" type="primary">nuoN</name>
    <name type="ordered locus">NGO_1737</name>
</gene>
<keyword id="KW-0997">Cell inner membrane</keyword>
<keyword id="KW-1003">Cell membrane</keyword>
<keyword id="KW-0472">Membrane</keyword>
<keyword id="KW-0520">NAD</keyword>
<keyword id="KW-0874">Quinone</keyword>
<keyword id="KW-1185">Reference proteome</keyword>
<keyword id="KW-1278">Translocase</keyword>
<keyword id="KW-0812">Transmembrane</keyword>
<keyword id="KW-1133">Transmembrane helix</keyword>
<keyword id="KW-0813">Transport</keyword>
<keyword id="KW-0830">Ubiquinone</keyword>
<reference key="1">
    <citation type="submission" date="2003-03" db="EMBL/GenBank/DDBJ databases">
        <title>The complete genome sequence of Neisseria gonorrhoeae.</title>
        <authorList>
            <person name="Lewis L.A."/>
            <person name="Gillaspy A.F."/>
            <person name="McLaughlin R.E."/>
            <person name="Gipson M."/>
            <person name="Ducey T.F."/>
            <person name="Ownbey T."/>
            <person name="Hartman K."/>
            <person name="Nydick C."/>
            <person name="Carson M.B."/>
            <person name="Vaughn J."/>
            <person name="Thomson C."/>
            <person name="Song L."/>
            <person name="Lin S."/>
            <person name="Yuan X."/>
            <person name="Najar F."/>
            <person name="Zhan M."/>
            <person name="Ren Q."/>
            <person name="Zhu H."/>
            <person name="Qi S."/>
            <person name="Kenton S.M."/>
            <person name="Lai H."/>
            <person name="White J.D."/>
            <person name="Clifton S."/>
            <person name="Roe B.A."/>
            <person name="Dyer D.W."/>
        </authorList>
    </citation>
    <scope>NUCLEOTIDE SEQUENCE [LARGE SCALE GENOMIC DNA]</scope>
    <source>
        <strain>ATCC 700825 / FA 1090</strain>
    </source>
</reference>
<evidence type="ECO:0000255" key="1">
    <source>
        <dbReference type="HAMAP-Rule" id="MF_00445"/>
    </source>
</evidence>
<dbReference type="EC" id="7.1.1.-" evidence="1"/>
<dbReference type="EMBL" id="AE004969">
    <property type="protein sequence ID" value="AAW90358.1"/>
    <property type="molecule type" value="Genomic_DNA"/>
</dbReference>
<dbReference type="RefSeq" id="WP_003694246.1">
    <property type="nucleotide sequence ID" value="NC_002946.2"/>
</dbReference>
<dbReference type="RefSeq" id="YP_208770.1">
    <property type="nucleotide sequence ID" value="NC_002946.2"/>
</dbReference>
<dbReference type="SMR" id="Q5F629"/>
<dbReference type="STRING" id="242231.NGO_1737"/>
<dbReference type="KEGG" id="ngo:NGO_1737"/>
<dbReference type="PATRIC" id="fig|242231.10.peg.2076"/>
<dbReference type="HOGENOM" id="CLU_007100_1_3_4"/>
<dbReference type="Proteomes" id="UP000000535">
    <property type="component" value="Chromosome"/>
</dbReference>
<dbReference type="GO" id="GO:0005886">
    <property type="term" value="C:plasma membrane"/>
    <property type="evidence" value="ECO:0007669"/>
    <property type="project" value="UniProtKB-SubCell"/>
</dbReference>
<dbReference type="GO" id="GO:0008137">
    <property type="term" value="F:NADH dehydrogenase (ubiquinone) activity"/>
    <property type="evidence" value="ECO:0007669"/>
    <property type="project" value="InterPro"/>
</dbReference>
<dbReference type="GO" id="GO:0050136">
    <property type="term" value="F:NADH:ubiquinone reductase (non-electrogenic) activity"/>
    <property type="evidence" value="ECO:0007669"/>
    <property type="project" value="UniProtKB-UniRule"/>
</dbReference>
<dbReference type="GO" id="GO:0048038">
    <property type="term" value="F:quinone binding"/>
    <property type="evidence" value="ECO:0007669"/>
    <property type="project" value="UniProtKB-KW"/>
</dbReference>
<dbReference type="GO" id="GO:0042773">
    <property type="term" value="P:ATP synthesis coupled electron transport"/>
    <property type="evidence" value="ECO:0007669"/>
    <property type="project" value="InterPro"/>
</dbReference>
<dbReference type="HAMAP" id="MF_00445">
    <property type="entry name" value="NDH1_NuoN_1"/>
    <property type="match status" value="1"/>
</dbReference>
<dbReference type="InterPro" id="IPR010096">
    <property type="entry name" value="NADH-Q_OxRdtase_suN/2"/>
</dbReference>
<dbReference type="InterPro" id="IPR001750">
    <property type="entry name" value="ND/Mrp_TM"/>
</dbReference>
<dbReference type="NCBIfam" id="TIGR01770">
    <property type="entry name" value="NDH_I_N"/>
    <property type="match status" value="1"/>
</dbReference>
<dbReference type="NCBIfam" id="NF004442">
    <property type="entry name" value="PRK05777.1-5"/>
    <property type="match status" value="1"/>
</dbReference>
<dbReference type="PANTHER" id="PTHR22773">
    <property type="entry name" value="NADH DEHYDROGENASE"/>
    <property type="match status" value="1"/>
</dbReference>
<dbReference type="Pfam" id="PF00361">
    <property type="entry name" value="Proton_antipo_M"/>
    <property type="match status" value="1"/>
</dbReference>
<dbReference type="PRINTS" id="PR01434">
    <property type="entry name" value="NADHDHGNASE5"/>
</dbReference>
<feature type="chain" id="PRO_0000391185" description="NADH-quinone oxidoreductase subunit N">
    <location>
        <begin position="1"/>
        <end position="481"/>
    </location>
</feature>
<feature type="transmembrane region" description="Helical" evidence="1">
    <location>
        <begin position="11"/>
        <end position="31"/>
    </location>
</feature>
<feature type="transmembrane region" description="Helical" evidence="1">
    <location>
        <begin position="38"/>
        <end position="58"/>
    </location>
</feature>
<feature type="transmembrane region" description="Helical" evidence="1">
    <location>
        <begin position="74"/>
        <end position="94"/>
    </location>
</feature>
<feature type="transmembrane region" description="Helical" evidence="1">
    <location>
        <begin position="103"/>
        <end position="123"/>
    </location>
</feature>
<feature type="transmembrane region" description="Helical" evidence="1">
    <location>
        <begin position="128"/>
        <end position="148"/>
    </location>
</feature>
<feature type="transmembrane region" description="Helical" evidence="1">
    <location>
        <begin position="163"/>
        <end position="183"/>
    </location>
</feature>
<feature type="transmembrane region" description="Helical" evidence="1">
    <location>
        <begin position="208"/>
        <end position="228"/>
    </location>
</feature>
<feature type="transmembrane region" description="Helical" evidence="1">
    <location>
        <begin position="241"/>
        <end position="261"/>
    </location>
</feature>
<feature type="transmembrane region" description="Helical" evidence="1">
    <location>
        <begin position="272"/>
        <end position="292"/>
    </location>
</feature>
<feature type="transmembrane region" description="Helical" evidence="1">
    <location>
        <begin position="300"/>
        <end position="322"/>
    </location>
</feature>
<feature type="transmembrane region" description="Helical" evidence="1">
    <location>
        <begin position="332"/>
        <end position="352"/>
    </location>
</feature>
<feature type="transmembrane region" description="Helical" evidence="1">
    <location>
        <begin position="368"/>
        <end position="388"/>
    </location>
</feature>
<feature type="transmembrane region" description="Helical" evidence="1">
    <location>
        <begin position="404"/>
        <end position="424"/>
    </location>
</feature>
<feature type="transmembrane region" description="Helical" evidence="1">
    <location>
        <begin position="450"/>
        <end position="470"/>
    </location>
</feature>
<comment type="function">
    <text evidence="1">NDH-1 shuttles electrons from NADH, via FMN and iron-sulfur (Fe-S) centers, to quinones in the respiratory chain. The immediate electron acceptor for the enzyme in this species is believed to be ubiquinone. Couples the redox reaction to proton translocation (for every two electrons transferred, four hydrogen ions are translocated across the cytoplasmic membrane), and thus conserves the redox energy in a proton gradient.</text>
</comment>
<comment type="catalytic activity">
    <reaction evidence="1">
        <text>a quinone + NADH + 5 H(+)(in) = a quinol + NAD(+) + 4 H(+)(out)</text>
        <dbReference type="Rhea" id="RHEA:57888"/>
        <dbReference type="ChEBI" id="CHEBI:15378"/>
        <dbReference type="ChEBI" id="CHEBI:24646"/>
        <dbReference type="ChEBI" id="CHEBI:57540"/>
        <dbReference type="ChEBI" id="CHEBI:57945"/>
        <dbReference type="ChEBI" id="CHEBI:132124"/>
    </reaction>
</comment>
<comment type="subunit">
    <text evidence="1">NDH-1 is composed of 14 different subunits. Subunits NuoA, H, J, K, L, M, N constitute the membrane sector of the complex.</text>
</comment>
<comment type="subcellular location">
    <subcellularLocation>
        <location evidence="1">Cell inner membrane</location>
        <topology evidence="1">Multi-pass membrane protein</topology>
    </subcellularLocation>
</comment>
<comment type="similarity">
    <text evidence="1">Belongs to the complex I subunit 2 family.</text>
</comment>
<proteinExistence type="inferred from homology"/>
<organism>
    <name type="scientific">Neisseria gonorrhoeae (strain ATCC 700825 / FA 1090)</name>
    <dbReference type="NCBI Taxonomy" id="242231"/>
    <lineage>
        <taxon>Bacteria</taxon>
        <taxon>Pseudomonadati</taxon>
        <taxon>Pseudomonadota</taxon>
        <taxon>Betaproteobacteria</taxon>
        <taxon>Neisseriales</taxon>
        <taxon>Neisseriaceae</taxon>
        <taxon>Neisseria</taxon>
    </lineage>
</organism>
<name>NUON_NEIG1</name>
<sequence>MNWSDLNLMPALPEVALLSLLVLLLPADLWASDDKCRWTHYGALATVAVTAAVQLAVWEQGSTSSFNGMYIADGMSRLAKMVLYALTFVLFVYAKPYNQVRGIFKGEFYTLSLFALLGMSVMVSAGHFLTAYIGLELLSLALYALIALRRDSGFAAEAALKYFVLGALASGLLLYGISMVYGATGSLEFAGVLASSFNEEANEWLLKLGLVFIVVAVAFKLGAVPFHMWMPDVYHGAPTSVTALVGTAPKIAAVVFAFRILVTGLGTVHHDWSLMFALLAAASLLVGNLAAIMQTNIKRMLAYSTVSHMGFILLAFMAGAVGFAAGLYYAITYALMAAAGFGVLMVLSDGDNECENISDLAGLNQHRVWLAFLMLLVMFSMAGIPPLMGFYAKFGVIMALLKQGYVWLSVFAVVMSLVGAFYYLRVVKVMYFDESGRARPAAGGNNAAKSLLSVNALLLVLWGIMPQTVIDWCAKALENTL</sequence>